<proteinExistence type="inferred from homology"/>
<organism>
    <name type="scientific">Debaryomyces hansenii (strain ATCC 36239 / CBS 767 / BCRC 21394 / JCM 1990 / NBRC 0083 / IGC 2968)</name>
    <name type="common">Yeast</name>
    <name type="synonym">Torulaspora hansenii</name>
    <dbReference type="NCBI Taxonomy" id="284592"/>
    <lineage>
        <taxon>Eukaryota</taxon>
        <taxon>Fungi</taxon>
        <taxon>Dikarya</taxon>
        <taxon>Ascomycota</taxon>
        <taxon>Saccharomycotina</taxon>
        <taxon>Pichiomycetes</taxon>
        <taxon>Debaryomycetaceae</taxon>
        <taxon>Debaryomyces</taxon>
    </lineage>
</organism>
<keyword id="KW-0227">DNA damage</keyword>
<keyword id="KW-0234">DNA repair</keyword>
<keyword id="KW-0479">Metal-binding</keyword>
<keyword id="KW-0539">Nucleus</keyword>
<keyword id="KW-1185">Reference proteome</keyword>
<keyword id="KW-0804">Transcription</keyword>
<keyword id="KW-0805">Transcription regulation</keyword>
<keyword id="KW-0862">Zinc</keyword>
<keyword id="KW-0863">Zinc-finger</keyword>
<evidence type="ECO:0000250" key="1"/>
<evidence type="ECO:0000250" key="2">
    <source>
        <dbReference type="UniProtKB" id="Q12004"/>
    </source>
</evidence>
<evidence type="ECO:0000256" key="3">
    <source>
        <dbReference type="SAM" id="MobiDB-lite"/>
    </source>
</evidence>
<evidence type="ECO:0000305" key="4"/>
<protein>
    <recommendedName>
        <fullName>General transcription and DNA repair factor IIH subunit TFB4</fullName>
        <shortName>TFIIH subunit TFB4</shortName>
    </recommendedName>
    <alternativeName>
        <fullName>RNA polymerase II transcription factor B subunit 4</fullName>
    </alternativeName>
</protein>
<feature type="chain" id="PRO_0000119271" description="General transcription and DNA repair factor IIH subunit TFB4">
    <location>
        <begin position="1"/>
        <end position="387"/>
    </location>
</feature>
<feature type="zinc finger region" description="C4-type">
    <location>
        <begin position="327"/>
        <end position="346"/>
    </location>
</feature>
<feature type="region of interest" description="Disordered" evidence="3">
    <location>
        <begin position="89"/>
        <end position="109"/>
    </location>
</feature>
<feature type="region of interest" description="Disordered" evidence="3">
    <location>
        <begin position="184"/>
        <end position="211"/>
    </location>
</feature>
<feature type="compositionally biased region" description="Basic and acidic residues" evidence="3">
    <location>
        <begin position="89"/>
        <end position="98"/>
    </location>
</feature>
<feature type="compositionally biased region" description="Polar residues" evidence="3">
    <location>
        <begin position="99"/>
        <end position="109"/>
    </location>
</feature>
<accession>Q6BL86</accession>
<name>TFB4_DEBHA</name>
<sequence>MDAIADSVFTDIGSSDSPSDDPSLLTVVLDVTPQSWYKIRNQITIQEVAKSLLVFLNAHLSLNNSNQVAFIASTPQGSKFLYPNPEKNYDEVSSKKNGEGSNLNKADSTSSLVGDGMYRQFRIVDEAVLEKLNEIFADISQNVDKSRSNSTLSGALSLALTYTNRMLNLDSSISTTTASAINTTTNANSNKTSSSGTTSNSMSTGGTNTTSLTSMRSRILIVSSNDDNDIKYIPIMNTTFAAQKMKVPIDVAKLGERDSSYLQQASDATNGVYLHIANPEGLIQTLSTAFFIEPSIRSLIILPTNSNVNYRASCFITGKSVNLGFVCSVCLCIMSIIPKEGKCPTCGSKFDEKILAQLRRGVVIPVKKKRKLDSNGNGQSDNVTPEI</sequence>
<reference key="1">
    <citation type="journal article" date="2004" name="Nature">
        <title>Genome evolution in yeasts.</title>
        <authorList>
            <person name="Dujon B."/>
            <person name="Sherman D."/>
            <person name="Fischer G."/>
            <person name="Durrens P."/>
            <person name="Casaregola S."/>
            <person name="Lafontaine I."/>
            <person name="de Montigny J."/>
            <person name="Marck C."/>
            <person name="Neuveglise C."/>
            <person name="Talla E."/>
            <person name="Goffard N."/>
            <person name="Frangeul L."/>
            <person name="Aigle M."/>
            <person name="Anthouard V."/>
            <person name="Babour A."/>
            <person name="Barbe V."/>
            <person name="Barnay S."/>
            <person name="Blanchin S."/>
            <person name="Beckerich J.-M."/>
            <person name="Beyne E."/>
            <person name="Bleykasten C."/>
            <person name="Boisrame A."/>
            <person name="Boyer J."/>
            <person name="Cattolico L."/>
            <person name="Confanioleri F."/>
            <person name="de Daruvar A."/>
            <person name="Despons L."/>
            <person name="Fabre E."/>
            <person name="Fairhead C."/>
            <person name="Ferry-Dumazet H."/>
            <person name="Groppi A."/>
            <person name="Hantraye F."/>
            <person name="Hennequin C."/>
            <person name="Jauniaux N."/>
            <person name="Joyet P."/>
            <person name="Kachouri R."/>
            <person name="Kerrest A."/>
            <person name="Koszul R."/>
            <person name="Lemaire M."/>
            <person name="Lesur I."/>
            <person name="Ma L."/>
            <person name="Muller H."/>
            <person name="Nicaud J.-M."/>
            <person name="Nikolski M."/>
            <person name="Oztas S."/>
            <person name="Ozier-Kalogeropoulos O."/>
            <person name="Pellenz S."/>
            <person name="Potier S."/>
            <person name="Richard G.-F."/>
            <person name="Straub M.-L."/>
            <person name="Suleau A."/>
            <person name="Swennen D."/>
            <person name="Tekaia F."/>
            <person name="Wesolowski-Louvel M."/>
            <person name="Westhof E."/>
            <person name="Wirth B."/>
            <person name="Zeniou-Meyer M."/>
            <person name="Zivanovic Y."/>
            <person name="Bolotin-Fukuhara M."/>
            <person name="Thierry A."/>
            <person name="Bouchier C."/>
            <person name="Caudron B."/>
            <person name="Scarpelli C."/>
            <person name="Gaillardin C."/>
            <person name="Weissenbach J."/>
            <person name="Wincker P."/>
            <person name="Souciet J.-L."/>
        </authorList>
    </citation>
    <scope>NUCLEOTIDE SEQUENCE [LARGE SCALE GENOMIC DNA]</scope>
    <source>
        <strain>ATCC 36239 / CBS 767 / BCRC 21394 / JCM 1990 / NBRC 0083 / IGC 2968</strain>
    </source>
</reference>
<dbReference type="EMBL" id="CR382138">
    <property type="protein sequence ID" value="CAG89405.2"/>
    <property type="molecule type" value="Genomic_DNA"/>
</dbReference>
<dbReference type="RefSeq" id="XP_461035.2">
    <property type="nucleotide sequence ID" value="XM_461035.1"/>
</dbReference>
<dbReference type="SMR" id="Q6BL86"/>
<dbReference type="FunCoup" id="Q6BL86">
    <property type="interactions" value="1223"/>
</dbReference>
<dbReference type="STRING" id="284592.Q6BL86"/>
<dbReference type="GeneID" id="2904162"/>
<dbReference type="KEGG" id="dha:DEHA2F15510g"/>
<dbReference type="eggNOG" id="KOG2487">
    <property type="taxonomic scope" value="Eukaryota"/>
</dbReference>
<dbReference type="HOGENOM" id="CLU_040211_0_0_1"/>
<dbReference type="InParanoid" id="Q6BL86"/>
<dbReference type="OMA" id="QGCDITS"/>
<dbReference type="OrthoDB" id="17307at2759"/>
<dbReference type="Proteomes" id="UP000000599">
    <property type="component" value="Chromosome F"/>
</dbReference>
<dbReference type="GO" id="GO:0000112">
    <property type="term" value="C:nucleotide-excision repair factor 3 complex"/>
    <property type="evidence" value="ECO:0007669"/>
    <property type="project" value="EnsemblFungi"/>
</dbReference>
<dbReference type="GO" id="GO:0000439">
    <property type="term" value="C:transcription factor TFIIH core complex"/>
    <property type="evidence" value="ECO:0007669"/>
    <property type="project" value="EnsemblFungi"/>
</dbReference>
<dbReference type="GO" id="GO:0005675">
    <property type="term" value="C:transcription factor TFIIH holo complex"/>
    <property type="evidence" value="ECO:0007669"/>
    <property type="project" value="EnsemblFungi"/>
</dbReference>
<dbReference type="GO" id="GO:0008270">
    <property type="term" value="F:zinc ion binding"/>
    <property type="evidence" value="ECO:0007669"/>
    <property type="project" value="UniProtKB-KW"/>
</dbReference>
<dbReference type="GO" id="GO:0006289">
    <property type="term" value="P:nucleotide-excision repair"/>
    <property type="evidence" value="ECO:0007669"/>
    <property type="project" value="EnsemblFungi"/>
</dbReference>
<dbReference type="GO" id="GO:0006355">
    <property type="term" value="P:regulation of DNA-templated transcription"/>
    <property type="evidence" value="ECO:0007669"/>
    <property type="project" value="InterPro"/>
</dbReference>
<dbReference type="GO" id="GO:0006367">
    <property type="term" value="P:transcription initiation at RNA polymerase II promoter"/>
    <property type="evidence" value="ECO:0007669"/>
    <property type="project" value="EnsemblFungi"/>
</dbReference>
<dbReference type="Gene3D" id="3.40.50.410">
    <property type="entry name" value="von Willebrand factor, type A domain"/>
    <property type="match status" value="1"/>
</dbReference>
<dbReference type="InterPro" id="IPR004600">
    <property type="entry name" value="TFIIH_Tfb4/GTF2H3"/>
</dbReference>
<dbReference type="InterPro" id="IPR036465">
    <property type="entry name" value="vWFA_dom_sf"/>
</dbReference>
<dbReference type="PANTHER" id="PTHR12831:SF0">
    <property type="entry name" value="GENERAL TRANSCRIPTION FACTOR IIH SUBUNIT 3"/>
    <property type="match status" value="1"/>
</dbReference>
<dbReference type="PANTHER" id="PTHR12831">
    <property type="entry name" value="TRANSCRIPTION INITIATION FACTOR IIH TFIIH , POLYPEPTIDE 3-RELATED"/>
    <property type="match status" value="1"/>
</dbReference>
<dbReference type="Pfam" id="PF03850">
    <property type="entry name" value="Tfb4"/>
    <property type="match status" value="1"/>
</dbReference>
<comment type="function">
    <text evidence="2">Component of the general transcription and DNA repair factor IIH (TFIIH) core complex, which is involved in general and transcription-coupled nucleotide excision repair (NER) of damaged DNA and, when complexed to TFIIK, in RNA transcription by RNA polymerase II. In NER, TFIIH acts by opening DNA around the lesion to allow the excision of the damaged oligonucleotide and its replacement by a new DNA fragment. In transcription, TFIIH has an essential role in transcription initiation. When the pre-initiation complex (PIC) has been established, TFIIH is required for promoter opening and promoter escape. Phosphorylation of the C-terminal tail (CTD) of the largest subunit of RNA polymerase II by the kinase module TFIIK controls the initiation of transcription.</text>
</comment>
<comment type="subunit">
    <text evidence="2">Component of the 7-subunit TFIIH core complex composed of XPB/SSL2, XPD/RAD3, SSL1, TFB1, TFB2, TFB4 and TFB5, which is active in NER. The core complex associates with the 3-subunit CTD-kinase module TFIIK composed of CCL1, KIN28 and TFB3 to form the 10-subunit holoenzyme (holo-TFIIH) active in transcription.</text>
</comment>
<comment type="subcellular location">
    <subcellularLocation>
        <location evidence="1">Nucleus</location>
    </subcellularLocation>
</comment>
<comment type="similarity">
    <text evidence="4">Belongs to the TFB4 family.</text>
</comment>
<gene>
    <name type="primary">TFB4</name>
    <name type="ordered locus">DEHA2F15510g</name>
</gene>